<feature type="signal peptide" evidence="2">
    <location>
        <begin position="1"/>
        <end position="26"/>
    </location>
</feature>
<feature type="chain" id="PRO_0000295274" description="Peptidoglycan recognition protein 3">
    <location>
        <begin position="27"/>
        <end position="347"/>
    </location>
</feature>
<feature type="domain" description="N-acetylmuramoyl-L-alanine amidase 1" evidence="2">
    <location>
        <begin position="77"/>
        <end position="185"/>
    </location>
</feature>
<feature type="domain" description="N-acetylmuramoyl-L-alanine amidase 2" evidence="2">
    <location>
        <begin position="206"/>
        <end position="328"/>
    </location>
</feature>
<feature type="region of interest" description="Interaction with murein" evidence="1">
    <location>
        <begin position="270"/>
        <end position="275"/>
    </location>
</feature>
<feature type="binding site" evidence="1">
    <location>
        <position position="237"/>
    </location>
    <ligand>
        <name>peptidoglycan</name>
        <dbReference type="ChEBI" id="CHEBI:8005"/>
    </ligand>
</feature>
<feature type="binding site" evidence="1">
    <location>
        <position position="248"/>
    </location>
    <ligand>
        <name>peptidoglycan</name>
        <dbReference type="ChEBI" id="CHEBI:8005"/>
    </ligand>
</feature>
<feature type="glycosylation site" description="N-linked (GlcNAc...) asparagine" evidence="2">
    <location>
        <position position="120"/>
    </location>
</feature>
<feature type="disulfide bond" evidence="1">
    <location>
        <begin position="184"/>
        <end position="306"/>
    </location>
</feature>
<feature type="disulfide bond" evidence="1">
    <location>
        <begin position="200"/>
        <end position="244"/>
    </location>
</feature>
<feature type="disulfide bond" evidence="1">
    <location>
        <begin position="220"/>
        <end position="226"/>
    </location>
</feature>
<feature type="sequence conflict" description="In Ref. 1; AAS49172." evidence="4" ref="1">
    <original>F</original>
    <variation>S</variation>
    <location>
        <position position="149"/>
    </location>
</feature>
<feature type="sequence conflict" description="In Ref. 1; AAS49172." evidence="4" ref="1">
    <original>Y</original>
    <variation>H</variation>
    <location>
        <position position="155"/>
    </location>
</feature>
<feature type="sequence conflict" description="In Ref. 1; AAS49172." evidence="4" ref="1">
    <original>I</original>
    <variation>T</variation>
    <location>
        <position position="161"/>
    </location>
</feature>
<feature type="sequence conflict" description="In Ref. 1; AAS49172 and 3; AAI28292." evidence="4" ref="1 3">
    <original>D</original>
    <variation>G</variation>
    <location>
        <position position="232"/>
    </location>
</feature>
<organism>
    <name type="scientific">Mus musculus</name>
    <name type="common">Mouse</name>
    <dbReference type="NCBI Taxonomy" id="10090"/>
    <lineage>
        <taxon>Eukaryota</taxon>
        <taxon>Metazoa</taxon>
        <taxon>Chordata</taxon>
        <taxon>Craniata</taxon>
        <taxon>Vertebrata</taxon>
        <taxon>Euteleostomi</taxon>
        <taxon>Mammalia</taxon>
        <taxon>Eutheria</taxon>
        <taxon>Euarchontoglires</taxon>
        <taxon>Glires</taxon>
        <taxon>Rodentia</taxon>
        <taxon>Myomorpha</taxon>
        <taxon>Muroidea</taxon>
        <taxon>Muridae</taxon>
        <taxon>Murinae</taxon>
        <taxon>Mus</taxon>
        <taxon>Mus</taxon>
    </lineage>
</organism>
<dbReference type="EMBL" id="AY518698">
    <property type="protein sequence ID" value="AAS49172.1"/>
    <property type="molecule type" value="mRNA"/>
</dbReference>
<dbReference type="EMBL" id="AC163215">
    <property type="status" value="NOT_ANNOTATED_CDS"/>
    <property type="molecule type" value="Genomic_DNA"/>
</dbReference>
<dbReference type="EMBL" id="BC128291">
    <property type="protein sequence ID" value="AAI28292.1"/>
    <property type="molecule type" value="mRNA"/>
</dbReference>
<dbReference type="CCDS" id="CCDS17545.1"/>
<dbReference type="RefSeq" id="NP_997130.2">
    <property type="nucleotide sequence ID" value="NM_207247.4"/>
</dbReference>
<dbReference type="SMR" id="A1A547"/>
<dbReference type="FunCoup" id="A1A547">
    <property type="interactions" value="4"/>
</dbReference>
<dbReference type="STRING" id="10090.ENSMUSP00000035737"/>
<dbReference type="GlyCosmos" id="A1A547">
    <property type="glycosylation" value="1 site, No reported glycans"/>
</dbReference>
<dbReference type="GlyGen" id="A1A547">
    <property type="glycosylation" value="1 site"/>
</dbReference>
<dbReference type="PhosphoSitePlus" id="A1A547"/>
<dbReference type="PaxDb" id="10090-ENSMUSP00000035737"/>
<dbReference type="ProteomicsDB" id="287922"/>
<dbReference type="Antibodypedia" id="34121">
    <property type="antibodies" value="68 antibodies from 24 providers"/>
</dbReference>
<dbReference type="DNASU" id="242100"/>
<dbReference type="Ensembl" id="ENSMUST00000047660.5">
    <property type="protein sequence ID" value="ENSMUSP00000035737.5"/>
    <property type="gene ID" value="ENSMUSG00000042244.5"/>
</dbReference>
<dbReference type="GeneID" id="242100"/>
<dbReference type="KEGG" id="mmu:242100"/>
<dbReference type="UCSC" id="uc008qdi.2">
    <property type="organism name" value="mouse"/>
</dbReference>
<dbReference type="AGR" id="MGI:2685266"/>
<dbReference type="CTD" id="114771"/>
<dbReference type="MGI" id="MGI:2685266">
    <property type="gene designation" value="Pglyrp3"/>
</dbReference>
<dbReference type="VEuPathDB" id="HostDB:ENSMUSG00000042244"/>
<dbReference type="eggNOG" id="ENOG502S2KY">
    <property type="taxonomic scope" value="Eukaryota"/>
</dbReference>
<dbReference type="GeneTree" id="ENSGT00940000162657"/>
<dbReference type="HOGENOM" id="CLU_037559_1_0_1"/>
<dbReference type="InParanoid" id="A1A547"/>
<dbReference type="OMA" id="SVYTIGW"/>
<dbReference type="OrthoDB" id="10001926at2759"/>
<dbReference type="PhylomeDB" id="A1A547"/>
<dbReference type="TreeFam" id="TF323898"/>
<dbReference type="Reactome" id="R-MMU-6803157">
    <property type="pathway name" value="Antimicrobial peptides"/>
</dbReference>
<dbReference type="BioGRID-ORCS" id="242100">
    <property type="hits" value="2 hits in 79 CRISPR screens"/>
</dbReference>
<dbReference type="ChiTaRS" id="Pglyrp3">
    <property type="organism name" value="mouse"/>
</dbReference>
<dbReference type="PRO" id="PR:A1A547"/>
<dbReference type="Proteomes" id="UP000000589">
    <property type="component" value="Chromosome 3"/>
</dbReference>
<dbReference type="RNAct" id="A1A547">
    <property type="molecule type" value="protein"/>
</dbReference>
<dbReference type="Bgee" id="ENSMUSG00000042244">
    <property type="expression patterns" value="Expressed in esophagus and 12 other cell types or tissues"/>
</dbReference>
<dbReference type="GO" id="GO:0005576">
    <property type="term" value="C:extracellular region"/>
    <property type="evidence" value="ECO:0007669"/>
    <property type="project" value="UniProtKB-SubCell"/>
</dbReference>
<dbReference type="GO" id="GO:0032991">
    <property type="term" value="C:protein-containing complex"/>
    <property type="evidence" value="ECO:0007669"/>
    <property type="project" value="Ensembl"/>
</dbReference>
<dbReference type="GO" id="GO:0008745">
    <property type="term" value="F:N-acetylmuramoyl-L-alanine amidase activity"/>
    <property type="evidence" value="ECO:0007669"/>
    <property type="project" value="InterPro"/>
</dbReference>
<dbReference type="GO" id="GO:0042834">
    <property type="term" value="F:peptidoglycan binding"/>
    <property type="evidence" value="ECO:0000250"/>
    <property type="project" value="UniProtKB"/>
</dbReference>
<dbReference type="GO" id="GO:0016019">
    <property type="term" value="F:peptidoglycan immune receptor activity"/>
    <property type="evidence" value="ECO:0007669"/>
    <property type="project" value="Ensembl"/>
</dbReference>
<dbReference type="GO" id="GO:0046982">
    <property type="term" value="F:protein heterodimerization activity"/>
    <property type="evidence" value="ECO:0007669"/>
    <property type="project" value="Ensembl"/>
</dbReference>
<dbReference type="GO" id="GO:0008270">
    <property type="term" value="F:zinc ion binding"/>
    <property type="evidence" value="ECO:0007669"/>
    <property type="project" value="InterPro"/>
</dbReference>
<dbReference type="GO" id="GO:0061844">
    <property type="term" value="P:antimicrobial humoral immune response mediated by antimicrobial peptide"/>
    <property type="evidence" value="ECO:0007669"/>
    <property type="project" value="Ensembl"/>
</dbReference>
<dbReference type="GO" id="GO:0051701">
    <property type="term" value="P:biological process involved in interaction with host"/>
    <property type="evidence" value="ECO:0000315"/>
    <property type="project" value="MGI"/>
</dbReference>
<dbReference type="GO" id="GO:0050830">
    <property type="term" value="P:defense response to Gram-positive bacterium"/>
    <property type="evidence" value="ECO:0007669"/>
    <property type="project" value="Ensembl"/>
</dbReference>
<dbReference type="GO" id="GO:0016045">
    <property type="term" value="P:detection of bacterium"/>
    <property type="evidence" value="ECO:0007669"/>
    <property type="project" value="Ensembl"/>
</dbReference>
<dbReference type="GO" id="GO:0045087">
    <property type="term" value="P:innate immune response"/>
    <property type="evidence" value="ECO:0007669"/>
    <property type="project" value="UniProtKB-KW"/>
</dbReference>
<dbReference type="GO" id="GO:0031640">
    <property type="term" value="P:killing of cells of another organism"/>
    <property type="evidence" value="ECO:0007669"/>
    <property type="project" value="Ensembl"/>
</dbReference>
<dbReference type="GO" id="GO:0032827">
    <property type="term" value="P:negative regulation of natural killer cell differentiation involved in immune response"/>
    <property type="evidence" value="ECO:0000315"/>
    <property type="project" value="MGI"/>
</dbReference>
<dbReference type="GO" id="GO:0032689">
    <property type="term" value="P:negative regulation of type II interferon production"/>
    <property type="evidence" value="ECO:0000315"/>
    <property type="project" value="MGI"/>
</dbReference>
<dbReference type="GO" id="GO:0009253">
    <property type="term" value="P:peptidoglycan catabolic process"/>
    <property type="evidence" value="ECO:0007669"/>
    <property type="project" value="InterPro"/>
</dbReference>
<dbReference type="CDD" id="cd06583">
    <property type="entry name" value="PGRP"/>
    <property type="match status" value="2"/>
</dbReference>
<dbReference type="FunFam" id="3.40.80.10:FF:000001">
    <property type="entry name" value="Peptidoglycan recognition protein 1"/>
    <property type="match status" value="1"/>
</dbReference>
<dbReference type="FunFam" id="3.40.80.10:FF:000004">
    <property type="entry name" value="Peptidoglycan recognition protein 4"/>
    <property type="match status" value="1"/>
</dbReference>
<dbReference type="Gene3D" id="3.40.80.10">
    <property type="entry name" value="Peptidoglycan recognition protein-like"/>
    <property type="match status" value="2"/>
</dbReference>
<dbReference type="InterPro" id="IPR036505">
    <property type="entry name" value="Amidase/PGRP_sf"/>
</dbReference>
<dbReference type="InterPro" id="IPR002502">
    <property type="entry name" value="Amidase_domain"/>
</dbReference>
<dbReference type="InterPro" id="IPR015510">
    <property type="entry name" value="PGRP"/>
</dbReference>
<dbReference type="InterPro" id="IPR006619">
    <property type="entry name" value="PGRP_domain_met/bac"/>
</dbReference>
<dbReference type="PANTHER" id="PTHR11022">
    <property type="entry name" value="PEPTIDOGLYCAN RECOGNITION PROTEIN"/>
    <property type="match status" value="1"/>
</dbReference>
<dbReference type="PANTHER" id="PTHR11022:SF12">
    <property type="entry name" value="PEPTIDOGLYCAN RECOGNITION PROTEIN 3"/>
    <property type="match status" value="1"/>
</dbReference>
<dbReference type="Pfam" id="PF01510">
    <property type="entry name" value="Amidase_2"/>
    <property type="match status" value="2"/>
</dbReference>
<dbReference type="SMART" id="SM00644">
    <property type="entry name" value="Ami_2"/>
    <property type="match status" value="2"/>
</dbReference>
<dbReference type="SMART" id="SM00701">
    <property type="entry name" value="PGRP"/>
    <property type="match status" value="2"/>
</dbReference>
<dbReference type="SUPFAM" id="SSF55846">
    <property type="entry name" value="N-acetylmuramoyl-L-alanine amidase-like"/>
    <property type="match status" value="2"/>
</dbReference>
<name>PGRP3_MOUSE</name>
<comment type="function">
    <text evidence="1">Pattern receptor that binds to murein peptidoglycans (PGN) of Gram-positive bacteria. Has bactericidal activity towards Gram-positive bacteria. May kill Gram-positive bacteria by interfering with peptidoglycan biosynthesis. Also binds to Gram-negative bacteria, and has bacteriostatic activity towards Gram-negative bacteria. Plays a role in innate immunity (By similarity).</text>
</comment>
<comment type="subunit">
    <text evidence="1">Monomer. Homodimer; disulfide-linked. Heterodimer with PGLYRP4; disulfide-linked (By similarity).</text>
</comment>
<comment type="subcellular location">
    <subcellularLocation>
        <location evidence="1">Secreted</location>
    </subcellularLocation>
</comment>
<comment type="tissue specificity">
    <text evidence="3">Detected in lung, spleen and stomach, and at low levels in eye, heart, thymus and testis.</text>
</comment>
<comment type="similarity">
    <text evidence="4">Belongs to the N-acetylmuramoyl-L-alanine amidase 2 family.</text>
</comment>
<keyword id="KW-0044">Antibiotic</keyword>
<keyword id="KW-0929">Antimicrobial</keyword>
<keyword id="KW-1015">Disulfide bond</keyword>
<keyword id="KW-0325">Glycoprotein</keyword>
<keyword id="KW-0391">Immunity</keyword>
<keyword id="KW-0399">Innate immunity</keyword>
<keyword id="KW-1185">Reference proteome</keyword>
<keyword id="KW-0677">Repeat</keyword>
<keyword id="KW-0964">Secreted</keyword>
<keyword id="KW-0732">Signal</keyword>
<reference key="1">
    <citation type="journal article" date="2004" name="Genomics">
        <title>Murine peptidoglycan recognition proteins PglyrpIalpha and PglyrpIbeta are encoded in the epidermal differentiation complex and are expressed in epidermal and hematopoietic tissues.</title>
        <authorList>
            <person name="Mathur P."/>
            <person name="Murray B."/>
            <person name="Crowell T."/>
            <person name="Gardner H."/>
            <person name="Allaire N."/>
            <person name="Hsu Y.-M."/>
            <person name="Thill G."/>
            <person name="Carulli J.P."/>
        </authorList>
    </citation>
    <scope>NUCLEOTIDE SEQUENCE [MRNA]</scope>
    <scope>TISSUE SPECIFICITY</scope>
</reference>
<reference key="2">
    <citation type="journal article" date="2009" name="PLoS Biol.">
        <title>Lineage-specific biology revealed by a finished genome assembly of the mouse.</title>
        <authorList>
            <person name="Church D.M."/>
            <person name="Goodstadt L."/>
            <person name="Hillier L.W."/>
            <person name="Zody M.C."/>
            <person name="Goldstein S."/>
            <person name="She X."/>
            <person name="Bult C.J."/>
            <person name="Agarwala R."/>
            <person name="Cherry J.L."/>
            <person name="DiCuccio M."/>
            <person name="Hlavina W."/>
            <person name="Kapustin Y."/>
            <person name="Meric P."/>
            <person name="Maglott D."/>
            <person name="Birtle Z."/>
            <person name="Marques A.C."/>
            <person name="Graves T."/>
            <person name="Zhou S."/>
            <person name="Teague B."/>
            <person name="Potamousis K."/>
            <person name="Churas C."/>
            <person name="Place M."/>
            <person name="Herschleb J."/>
            <person name="Runnheim R."/>
            <person name="Forrest D."/>
            <person name="Amos-Landgraf J."/>
            <person name="Schwartz D.C."/>
            <person name="Cheng Z."/>
            <person name="Lindblad-Toh K."/>
            <person name="Eichler E.E."/>
            <person name="Ponting C.P."/>
        </authorList>
    </citation>
    <scope>NUCLEOTIDE SEQUENCE [LARGE SCALE GENOMIC DNA]</scope>
    <source>
        <strain>C57BL/6J</strain>
    </source>
</reference>
<reference key="3">
    <citation type="journal article" date="2004" name="Genome Res.">
        <title>The status, quality, and expansion of the NIH full-length cDNA project: the Mammalian Gene Collection (MGC).</title>
        <authorList>
            <consortium name="The MGC Project Team"/>
        </authorList>
    </citation>
    <scope>NUCLEOTIDE SEQUENCE [LARGE SCALE MRNA]</scope>
</reference>
<gene>
    <name type="primary">Pglyrp3</name>
    <name type="synonym">Gm420</name>
    <name type="synonym">Pgrpia</name>
</gene>
<accession>A1A547</accession>
<accession>E9QMH8</accession>
<accession>Q6R1Z2</accession>
<protein>
    <recommendedName>
        <fullName>Peptidoglycan recognition protein 3</fullName>
    </recommendedName>
    <alternativeName>
        <fullName>Peptidoglycan recognition protein I-alpha</fullName>
        <shortName>PGLYRPIalpha</shortName>
        <shortName>PGRP-I-alpha</shortName>
    </alternativeName>
    <alternativeName>
        <fullName>Peptidoglycan recognition protein intermediate alpha</fullName>
    </alternativeName>
</protein>
<proteinExistence type="evidence at transcript level"/>
<evidence type="ECO:0000250" key="1"/>
<evidence type="ECO:0000255" key="2"/>
<evidence type="ECO:0000269" key="3">
    <source>
    </source>
</evidence>
<evidence type="ECO:0000305" key="4"/>
<sequence>MLVSWDHPKMLPRLLGFLALSLLACGNPTIVSRKEWGASSLTCRVPLSLPVPYLIIEQVTRMQCQDQITCSQVVRVLQSQYVHNKGWCDIAFNFLVGDDGKVYEGVGWYVQGLHTQGYNNVSLGIAFFGSKIGSPSPAALSATEDLIFFAIQNGYLSPKYIQPFLLKEETCLVPQHSEIPKKACPNITPRSAWEARETHCPQMNLPAKFVIIIHTAGKSCNESADCLVRVRDTQSFHIDNQDFCDIAYHFLVGQDGEVYEGVGWNIEGSHTYGYNDIALGIAFMGNFVEKPPNEASLKAAQSLIQCAVAKGYLTSNYLLMGHSDVSNILSPGQALYNIIKTWPHFKH</sequence>